<feature type="initiator methionine" description="Removed" evidence="1">
    <location>
        <position position="1"/>
    </location>
</feature>
<feature type="chain" id="PRO_0000050628" description="Fatty acid metabolism regulator protein">
    <location>
        <begin position="2"/>
        <end position="239"/>
    </location>
</feature>
<feature type="domain" description="HTH gntR-type" evidence="2">
    <location>
        <begin position="6"/>
        <end position="74"/>
    </location>
</feature>
<feature type="DNA-binding region" description="H-T-H motif" evidence="2">
    <location>
        <begin position="34"/>
        <end position="53"/>
    </location>
</feature>
<organism>
    <name type="scientific">Escherichia coli O157:H7</name>
    <dbReference type="NCBI Taxonomy" id="83334"/>
    <lineage>
        <taxon>Bacteria</taxon>
        <taxon>Pseudomonadati</taxon>
        <taxon>Pseudomonadota</taxon>
        <taxon>Gammaproteobacteria</taxon>
        <taxon>Enterobacterales</taxon>
        <taxon>Enterobacteriaceae</taxon>
        <taxon>Escherichia</taxon>
    </lineage>
</organism>
<comment type="function">
    <text evidence="2">Multifunctional regulator of fatty acid metabolism.</text>
</comment>
<comment type="subunit">
    <text evidence="2">Homodimer.</text>
</comment>
<comment type="subcellular location">
    <subcellularLocation>
        <location evidence="2">Cytoplasm</location>
    </subcellularLocation>
</comment>
<evidence type="ECO:0000250" key="1"/>
<evidence type="ECO:0000255" key="2">
    <source>
        <dbReference type="HAMAP-Rule" id="MF_00696"/>
    </source>
</evidence>
<dbReference type="EMBL" id="AE005174">
    <property type="protein sequence ID" value="AAG56038.1"/>
    <property type="molecule type" value="Genomic_DNA"/>
</dbReference>
<dbReference type="EMBL" id="BA000007">
    <property type="protein sequence ID" value="BAB35105.1"/>
    <property type="molecule type" value="Genomic_DNA"/>
</dbReference>
<dbReference type="PIR" id="B85697">
    <property type="entry name" value="B85697"/>
</dbReference>
<dbReference type="PIR" id="B99839">
    <property type="entry name" value="B99839"/>
</dbReference>
<dbReference type="RefSeq" id="NP_309709.1">
    <property type="nucleotide sequence ID" value="NC_002695.1"/>
</dbReference>
<dbReference type="RefSeq" id="WP_000234823.1">
    <property type="nucleotide sequence ID" value="NZ_VOAI01000042.1"/>
</dbReference>
<dbReference type="SMR" id="P0A8V8"/>
<dbReference type="STRING" id="155864.Z1950"/>
<dbReference type="GeneID" id="913189"/>
<dbReference type="GeneID" id="93776245"/>
<dbReference type="KEGG" id="ece:Z1950"/>
<dbReference type="KEGG" id="ecs:ECs_1682"/>
<dbReference type="PATRIC" id="fig|386585.9.peg.1779"/>
<dbReference type="eggNOG" id="COG2186">
    <property type="taxonomic scope" value="Bacteria"/>
</dbReference>
<dbReference type="HOGENOM" id="CLU_017584_9_4_6"/>
<dbReference type="OMA" id="TRVLDWR"/>
<dbReference type="Proteomes" id="UP000000558">
    <property type="component" value="Chromosome"/>
</dbReference>
<dbReference type="Proteomes" id="UP000002519">
    <property type="component" value="Chromosome"/>
</dbReference>
<dbReference type="GO" id="GO:0005737">
    <property type="term" value="C:cytoplasm"/>
    <property type="evidence" value="ECO:0007669"/>
    <property type="project" value="UniProtKB-SubCell"/>
</dbReference>
<dbReference type="GO" id="GO:0003677">
    <property type="term" value="F:DNA binding"/>
    <property type="evidence" value="ECO:0007669"/>
    <property type="project" value="UniProtKB-KW"/>
</dbReference>
<dbReference type="GO" id="GO:0003700">
    <property type="term" value="F:DNA-binding transcription factor activity"/>
    <property type="evidence" value="ECO:0007669"/>
    <property type="project" value="UniProtKB-UniRule"/>
</dbReference>
<dbReference type="GO" id="GO:0000062">
    <property type="term" value="F:fatty-acyl-CoA binding"/>
    <property type="evidence" value="ECO:0007669"/>
    <property type="project" value="InterPro"/>
</dbReference>
<dbReference type="GO" id="GO:0006631">
    <property type="term" value="P:fatty acid metabolic process"/>
    <property type="evidence" value="ECO:0007669"/>
    <property type="project" value="UniProtKB-KW"/>
</dbReference>
<dbReference type="GO" id="GO:0019217">
    <property type="term" value="P:regulation of fatty acid metabolic process"/>
    <property type="evidence" value="ECO:0007669"/>
    <property type="project" value="UniProtKB-UniRule"/>
</dbReference>
<dbReference type="CDD" id="cd07377">
    <property type="entry name" value="WHTH_GntR"/>
    <property type="match status" value="1"/>
</dbReference>
<dbReference type="FunFam" id="1.10.10.10:FF:000036">
    <property type="entry name" value="Fatty acid metabolism regulator protein"/>
    <property type="match status" value="1"/>
</dbReference>
<dbReference type="FunFam" id="1.20.120.530:FF:000003">
    <property type="entry name" value="Fatty acid metabolism regulator protein"/>
    <property type="match status" value="1"/>
</dbReference>
<dbReference type="Gene3D" id="1.20.120.530">
    <property type="entry name" value="GntR ligand-binding domain-like"/>
    <property type="match status" value="1"/>
</dbReference>
<dbReference type="Gene3D" id="1.10.10.10">
    <property type="entry name" value="Winged helix-like DNA-binding domain superfamily/Winged helix DNA-binding domain"/>
    <property type="match status" value="1"/>
</dbReference>
<dbReference type="HAMAP" id="MF_00696">
    <property type="entry name" value="HTH_FadR"/>
    <property type="match status" value="1"/>
</dbReference>
<dbReference type="InterPro" id="IPR014178">
    <property type="entry name" value="FA-response_TF_FadR"/>
</dbReference>
<dbReference type="InterPro" id="IPR028374">
    <property type="entry name" value="FadR_C"/>
</dbReference>
<dbReference type="InterPro" id="IPR008920">
    <property type="entry name" value="TF_FadR/GntR_C"/>
</dbReference>
<dbReference type="InterPro" id="IPR000524">
    <property type="entry name" value="Tscrpt_reg_HTH_GntR"/>
</dbReference>
<dbReference type="InterPro" id="IPR036388">
    <property type="entry name" value="WH-like_DNA-bd_sf"/>
</dbReference>
<dbReference type="InterPro" id="IPR036390">
    <property type="entry name" value="WH_DNA-bd_sf"/>
</dbReference>
<dbReference type="NCBIfam" id="TIGR02812">
    <property type="entry name" value="fadR_gamma"/>
    <property type="match status" value="1"/>
</dbReference>
<dbReference type="NCBIfam" id="NF003444">
    <property type="entry name" value="PRK04984.1"/>
    <property type="match status" value="1"/>
</dbReference>
<dbReference type="PANTHER" id="PTHR43537:SF52">
    <property type="entry name" value="FATTY ACID METABOLISM REGULATOR PROTEIN"/>
    <property type="match status" value="1"/>
</dbReference>
<dbReference type="PANTHER" id="PTHR43537">
    <property type="entry name" value="TRANSCRIPTIONAL REGULATOR, GNTR FAMILY"/>
    <property type="match status" value="1"/>
</dbReference>
<dbReference type="Pfam" id="PF07840">
    <property type="entry name" value="FadR_C"/>
    <property type="match status" value="1"/>
</dbReference>
<dbReference type="Pfam" id="PF00392">
    <property type="entry name" value="GntR"/>
    <property type="match status" value="1"/>
</dbReference>
<dbReference type="PRINTS" id="PR00035">
    <property type="entry name" value="HTHGNTR"/>
</dbReference>
<dbReference type="SMART" id="SM00345">
    <property type="entry name" value="HTH_GNTR"/>
    <property type="match status" value="1"/>
</dbReference>
<dbReference type="SUPFAM" id="SSF48008">
    <property type="entry name" value="GntR ligand-binding domain-like"/>
    <property type="match status" value="1"/>
</dbReference>
<dbReference type="SUPFAM" id="SSF46785">
    <property type="entry name" value="Winged helix' DNA-binding domain"/>
    <property type="match status" value="1"/>
</dbReference>
<dbReference type="PROSITE" id="PS50949">
    <property type="entry name" value="HTH_GNTR"/>
    <property type="match status" value="1"/>
</dbReference>
<accession>P0A8V8</accession>
<accession>P09371</accession>
<accession>P76827</accession>
<keyword id="KW-0010">Activator</keyword>
<keyword id="KW-0963">Cytoplasm</keyword>
<keyword id="KW-0238">DNA-binding</keyword>
<keyword id="KW-0276">Fatty acid metabolism</keyword>
<keyword id="KW-0443">Lipid metabolism</keyword>
<keyword id="KW-1185">Reference proteome</keyword>
<keyword id="KW-0678">Repressor</keyword>
<keyword id="KW-0804">Transcription</keyword>
<keyword id="KW-0805">Transcription regulation</keyword>
<gene>
    <name evidence="2" type="primary">fadR</name>
    <name type="ordered locus">Z1950</name>
    <name type="ordered locus">ECs1682</name>
</gene>
<name>FADR_ECO57</name>
<reference key="1">
    <citation type="journal article" date="2001" name="Nature">
        <title>Genome sequence of enterohaemorrhagic Escherichia coli O157:H7.</title>
        <authorList>
            <person name="Perna N.T."/>
            <person name="Plunkett G. III"/>
            <person name="Burland V."/>
            <person name="Mau B."/>
            <person name="Glasner J.D."/>
            <person name="Rose D.J."/>
            <person name="Mayhew G.F."/>
            <person name="Evans P.S."/>
            <person name="Gregor J."/>
            <person name="Kirkpatrick H.A."/>
            <person name="Posfai G."/>
            <person name="Hackett J."/>
            <person name="Klink S."/>
            <person name="Boutin A."/>
            <person name="Shao Y."/>
            <person name="Miller L."/>
            <person name="Grotbeck E.J."/>
            <person name="Davis N.W."/>
            <person name="Lim A."/>
            <person name="Dimalanta E.T."/>
            <person name="Potamousis K."/>
            <person name="Apodaca J."/>
            <person name="Anantharaman T.S."/>
            <person name="Lin J."/>
            <person name="Yen G."/>
            <person name="Schwartz D.C."/>
            <person name="Welch R.A."/>
            <person name="Blattner F.R."/>
        </authorList>
    </citation>
    <scope>NUCLEOTIDE SEQUENCE [LARGE SCALE GENOMIC DNA]</scope>
    <source>
        <strain>O157:H7 / EDL933 / ATCC 700927 / EHEC</strain>
    </source>
</reference>
<reference key="2">
    <citation type="journal article" date="2001" name="DNA Res.">
        <title>Complete genome sequence of enterohemorrhagic Escherichia coli O157:H7 and genomic comparison with a laboratory strain K-12.</title>
        <authorList>
            <person name="Hayashi T."/>
            <person name="Makino K."/>
            <person name="Ohnishi M."/>
            <person name="Kurokawa K."/>
            <person name="Ishii K."/>
            <person name="Yokoyama K."/>
            <person name="Han C.-G."/>
            <person name="Ohtsubo E."/>
            <person name="Nakayama K."/>
            <person name="Murata T."/>
            <person name="Tanaka M."/>
            <person name="Tobe T."/>
            <person name="Iida T."/>
            <person name="Takami H."/>
            <person name="Honda T."/>
            <person name="Sasakawa C."/>
            <person name="Ogasawara N."/>
            <person name="Yasunaga T."/>
            <person name="Kuhara S."/>
            <person name="Shiba T."/>
            <person name="Hattori M."/>
            <person name="Shinagawa H."/>
        </authorList>
    </citation>
    <scope>NUCLEOTIDE SEQUENCE [LARGE SCALE GENOMIC DNA]</scope>
    <source>
        <strain>O157:H7 / Sakai / RIMD 0509952 / EHEC</strain>
    </source>
</reference>
<sequence length="239" mass="26969">MVIKAQSPAGFAEEYIIESIWNNRFPPGTILPAERELSELIGVTRTTLREVLQRLARDGWLTIQHGKPTKVNNFWETSGLNILETLARLDHESVPQLIDNLLSVRTNISTIFIRTAFRQHPDKAQEVLATANEVADHADAFAELDYNIFRGLAFASGNPIYGLILNGMKGLYTRIGRHYFANPEARSLALGFYHKLSALCSEGAHDQVYETVRRYGHESGEIWHRMQKNLPGDLAIQGR</sequence>
<proteinExistence type="inferred from homology"/>
<protein>
    <recommendedName>
        <fullName evidence="2">Fatty acid metabolism regulator protein</fullName>
    </recommendedName>
</protein>